<comment type="function">
    <text evidence="1">Functions in the biosynthesis of branched-chain amino acids. Catalyzes the dehydration of (2R,3R)-2,3-dihydroxy-3-methylpentanoate (2,3-dihydroxy-3-methylvalerate) into 2-oxo-3-methylpentanoate (2-oxo-3-methylvalerate) and of (2R)-2,3-dihydroxy-3-methylbutanoate (2,3-dihydroxyisovalerate) into 2-oxo-3-methylbutanoate (2-oxoisovalerate), the penultimate precursor to L-isoleucine and L-valine, respectively.</text>
</comment>
<comment type="catalytic activity">
    <reaction evidence="1">
        <text>(2R)-2,3-dihydroxy-3-methylbutanoate = 3-methyl-2-oxobutanoate + H2O</text>
        <dbReference type="Rhea" id="RHEA:24809"/>
        <dbReference type="ChEBI" id="CHEBI:11851"/>
        <dbReference type="ChEBI" id="CHEBI:15377"/>
        <dbReference type="ChEBI" id="CHEBI:49072"/>
        <dbReference type="EC" id="4.2.1.9"/>
    </reaction>
    <physiologicalReaction direction="left-to-right" evidence="1">
        <dbReference type="Rhea" id="RHEA:24810"/>
    </physiologicalReaction>
</comment>
<comment type="catalytic activity">
    <reaction evidence="1">
        <text>(2R,3R)-2,3-dihydroxy-3-methylpentanoate = (S)-3-methyl-2-oxopentanoate + H2O</text>
        <dbReference type="Rhea" id="RHEA:27694"/>
        <dbReference type="ChEBI" id="CHEBI:15377"/>
        <dbReference type="ChEBI" id="CHEBI:35146"/>
        <dbReference type="ChEBI" id="CHEBI:49258"/>
        <dbReference type="EC" id="4.2.1.9"/>
    </reaction>
    <physiologicalReaction direction="left-to-right" evidence="1">
        <dbReference type="Rhea" id="RHEA:27695"/>
    </physiologicalReaction>
</comment>
<comment type="cofactor">
    <cofactor evidence="1">
        <name>[2Fe-2S] cluster</name>
        <dbReference type="ChEBI" id="CHEBI:190135"/>
    </cofactor>
    <text evidence="1">Binds 1 [2Fe-2S] cluster per subunit. This cluster acts as a Lewis acid cofactor.</text>
</comment>
<comment type="cofactor">
    <cofactor evidence="1">
        <name>Mg(2+)</name>
        <dbReference type="ChEBI" id="CHEBI:18420"/>
    </cofactor>
</comment>
<comment type="pathway">
    <text evidence="1">Amino-acid biosynthesis; L-isoleucine biosynthesis; L-isoleucine from 2-oxobutanoate: step 3/4.</text>
</comment>
<comment type="pathway">
    <text evidence="1">Amino-acid biosynthesis; L-valine biosynthesis; L-valine from pyruvate: step 3/4.</text>
</comment>
<comment type="subunit">
    <text evidence="1">Homodimer.</text>
</comment>
<comment type="similarity">
    <text evidence="1">Belongs to the IlvD/Edd family.</text>
</comment>
<gene>
    <name evidence="1" type="primary">ilvD</name>
    <name type="ordered locus">Ping_0346</name>
</gene>
<organism>
    <name type="scientific">Psychromonas ingrahamii (strain DSM 17664 / CCUG 51855 / 37)</name>
    <dbReference type="NCBI Taxonomy" id="357804"/>
    <lineage>
        <taxon>Bacteria</taxon>
        <taxon>Pseudomonadati</taxon>
        <taxon>Pseudomonadota</taxon>
        <taxon>Gammaproteobacteria</taxon>
        <taxon>Alteromonadales</taxon>
        <taxon>Psychromonadaceae</taxon>
        <taxon>Psychromonas</taxon>
    </lineage>
</organism>
<evidence type="ECO:0000255" key="1">
    <source>
        <dbReference type="HAMAP-Rule" id="MF_00012"/>
    </source>
</evidence>
<accession>A1SRU7</accession>
<reference key="1">
    <citation type="journal article" date="2008" name="BMC Genomics">
        <title>Genomics of an extreme psychrophile, Psychromonas ingrahamii.</title>
        <authorList>
            <person name="Riley M."/>
            <person name="Staley J.T."/>
            <person name="Danchin A."/>
            <person name="Wang T.Z."/>
            <person name="Brettin T.S."/>
            <person name="Hauser L.J."/>
            <person name="Land M.L."/>
            <person name="Thompson L.S."/>
        </authorList>
    </citation>
    <scope>NUCLEOTIDE SEQUENCE [LARGE SCALE GENOMIC DNA]</scope>
    <source>
        <strain>DSM 17664 / CCUG 51855 / 37</strain>
    </source>
</reference>
<keyword id="KW-0001">2Fe-2S</keyword>
<keyword id="KW-0028">Amino-acid biosynthesis</keyword>
<keyword id="KW-0100">Branched-chain amino acid biosynthesis</keyword>
<keyword id="KW-0408">Iron</keyword>
<keyword id="KW-0411">Iron-sulfur</keyword>
<keyword id="KW-0456">Lyase</keyword>
<keyword id="KW-0460">Magnesium</keyword>
<keyword id="KW-0479">Metal-binding</keyword>
<keyword id="KW-1185">Reference proteome</keyword>
<name>ILVD_PSYIN</name>
<protein>
    <recommendedName>
        <fullName evidence="1">Dihydroxy-acid dehydratase</fullName>
        <shortName evidence="1">DAD</shortName>
        <ecNumber evidence="1">4.2.1.9</ecNumber>
    </recommendedName>
</protein>
<dbReference type="EC" id="4.2.1.9" evidence="1"/>
<dbReference type="EMBL" id="CP000510">
    <property type="protein sequence ID" value="ABM02212.1"/>
    <property type="molecule type" value="Genomic_DNA"/>
</dbReference>
<dbReference type="RefSeq" id="WP_011768771.1">
    <property type="nucleotide sequence ID" value="NC_008709.1"/>
</dbReference>
<dbReference type="SMR" id="A1SRU7"/>
<dbReference type="STRING" id="357804.Ping_0346"/>
<dbReference type="KEGG" id="pin:Ping_0346"/>
<dbReference type="eggNOG" id="COG0129">
    <property type="taxonomic scope" value="Bacteria"/>
</dbReference>
<dbReference type="HOGENOM" id="CLU_014271_4_2_6"/>
<dbReference type="OrthoDB" id="9807077at2"/>
<dbReference type="UniPathway" id="UPA00047">
    <property type="reaction ID" value="UER00057"/>
</dbReference>
<dbReference type="UniPathway" id="UPA00049">
    <property type="reaction ID" value="UER00061"/>
</dbReference>
<dbReference type="Proteomes" id="UP000000639">
    <property type="component" value="Chromosome"/>
</dbReference>
<dbReference type="GO" id="GO:0005829">
    <property type="term" value="C:cytosol"/>
    <property type="evidence" value="ECO:0007669"/>
    <property type="project" value="TreeGrafter"/>
</dbReference>
<dbReference type="GO" id="GO:0051537">
    <property type="term" value="F:2 iron, 2 sulfur cluster binding"/>
    <property type="evidence" value="ECO:0007669"/>
    <property type="project" value="UniProtKB-UniRule"/>
</dbReference>
<dbReference type="GO" id="GO:0004160">
    <property type="term" value="F:dihydroxy-acid dehydratase activity"/>
    <property type="evidence" value="ECO:0007669"/>
    <property type="project" value="UniProtKB-UniRule"/>
</dbReference>
<dbReference type="GO" id="GO:0000287">
    <property type="term" value="F:magnesium ion binding"/>
    <property type="evidence" value="ECO:0007669"/>
    <property type="project" value="UniProtKB-UniRule"/>
</dbReference>
<dbReference type="GO" id="GO:0009097">
    <property type="term" value="P:isoleucine biosynthetic process"/>
    <property type="evidence" value="ECO:0007669"/>
    <property type="project" value="UniProtKB-UniRule"/>
</dbReference>
<dbReference type="GO" id="GO:0009099">
    <property type="term" value="P:L-valine biosynthetic process"/>
    <property type="evidence" value="ECO:0007669"/>
    <property type="project" value="UniProtKB-UniRule"/>
</dbReference>
<dbReference type="FunFam" id="3.50.30.80:FF:000001">
    <property type="entry name" value="Dihydroxy-acid dehydratase"/>
    <property type="match status" value="1"/>
</dbReference>
<dbReference type="Gene3D" id="3.50.30.80">
    <property type="entry name" value="IlvD/EDD C-terminal domain-like"/>
    <property type="match status" value="1"/>
</dbReference>
<dbReference type="HAMAP" id="MF_00012">
    <property type="entry name" value="IlvD"/>
    <property type="match status" value="1"/>
</dbReference>
<dbReference type="InterPro" id="IPR042096">
    <property type="entry name" value="Dihydro-acid_dehy_C"/>
</dbReference>
<dbReference type="InterPro" id="IPR004404">
    <property type="entry name" value="DihydroxyA_deHydtase"/>
</dbReference>
<dbReference type="InterPro" id="IPR020558">
    <property type="entry name" value="DiOHA_6PGluconate_deHydtase_CS"/>
</dbReference>
<dbReference type="InterPro" id="IPR056740">
    <property type="entry name" value="ILV_EDD_C"/>
</dbReference>
<dbReference type="InterPro" id="IPR000581">
    <property type="entry name" value="ILV_EDD_N"/>
</dbReference>
<dbReference type="InterPro" id="IPR037237">
    <property type="entry name" value="IlvD/EDD_N"/>
</dbReference>
<dbReference type="NCBIfam" id="TIGR00110">
    <property type="entry name" value="ilvD"/>
    <property type="match status" value="1"/>
</dbReference>
<dbReference type="NCBIfam" id="NF009103">
    <property type="entry name" value="PRK12448.1"/>
    <property type="match status" value="1"/>
</dbReference>
<dbReference type="PANTHER" id="PTHR43661">
    <property type="entry name" value="D-XYLONATE DEHYDRATASE"/>
    <property type="match status" value="1"/>
</dbReference>
<dbReference type="PANTHER" id="PTHR43661:SF3">
    <property type="entry name" value="D-XYLONATE DEHYDRATASE YAGF-RELATED"/>
    <property type="match status" value="1"/>
</dbReference>
<dbReference type="Pfam" id="PF24877">
    <property type="entry name" value="ILV_EDD_C"/>
    <property type="match status" value="1"/>
</dbReference>
<dbReference type="Pfam" id="PF00920">
    <property type="entry name" value="ILVD_EDD_N"/>
    <property type="match status" value="1"/>
</dbReference>
<dbReference type="SUPFAM" id="SSF143975">
    <property type="entry name" value="IlvD/EDD N-terminal domain-like"/>
    <property type="match status" value="1"/>
</dbReference>
<dbReference type="SUPFAM" id="SSF52016">
    <property type="entry name" value="LeuD/IlvD-like"/>
    <property type="match status" value="1"/>
</dbReference>
<dbReference type="PROSITE" id="PS00886">
    <property type="entry name" value="ILVD_EDD_1"/>
    <property type="match status" value="1"/>
</dbReference>
<dbReference type="PROSITE" id="PS00887">
    <property type="entry name" value="ILVD_EDD_2"/>
    <property type="match status" value="1"/>
</dbReference>
<feature type="chain" id="PRO_1000001039" description="Dihydroxy-acid dehydratase">
    <location>
        <begin position="1"/>
        <end position="612"/>
    </location>
</feature>
<feature type="active site" description="Proton acceptor" evidence="1">
    <location>
        <position position="517"/>
    </location>
</feature>
<feature type="binding site" evidence="1">
    <location>
        <position position="81"/>
    </location>
    <ligand>
        <name>Mg(2+)</name>
        <dbReference type="ChEBI" id="CHEBI:18420"/>
    </ligand>
</feature>
<feature type="binding site" evidence="1">
    <location>
        <position position="122"/>
    </location>
    <ligand>
        <name>[2Fe-2S] cluster</name>
        <dbReference type="ChEBI" id="CHEBI:190135"/>
    </ligand>
</feature>
<feature type="binding site" evidence="1">
    <location>
        <position position="123"/>
    </location>
    <ligand>
        <name>Mg(2+)</name>
        <dbReference type="ChEBI" id="CHEBI:18420"/>
    </ligand>
</feature>
<feature type="binding site" description="via carbamate group" evidence="1">
    <location>
        <position position="124"/>
    </location>
    <ligand>
        <name>Mg(2+)</name>
        <dbReference type="ChEBI" id="CHEBI:18420"/>
    </ligand>
</feature>
<feature type="binding site" evidence="1">
    <location>
        <position position="195"/>
    </location>
    <ligand>
        <name>[2Fe-2S] cluster</name>
        <dbReference type="ChEBI" id="CHEBI:190135"/>
    </ligand>
</feature>
<feature type="binding site" evidence="1">
    <location>
        <position position="491"/>
    </location>
    <ligand>
        <name>Mg(2+)</name>
        <dbReference type="ChEBI" id="CHEBI:18420"/>
    </ligand>
</feature>
<feature type="modified residue" description="N6-carboxylysine" evidence="1">
    <location>
        <position position="124"/>
    </location>
</feature>
<proteinExistence type="inferred from homology"/>
<sequence>MPQYRSKTSTHGRNMAGARALWRATGVKDDDFGKPIIAIANSFTQFVPGHVHLKDMGQLVAGAVEAAGGIAKEFNTIAIDDGIAMGHSGMLYSLPSRDLIADSIEYMVNAHCADAIVCISNCDKITPGMLMAALRLNIPVIFVSGGPMEAGKTKLSDQIIKLDLVDAMVMGPDKNVSDEDLAKVERSACPTCGSCSGMFTANSMNCLTEALGLSLPGNGSMLATHADREQLFLEAGERIVDITKRHYEQDDYSVLPRAIACREAFENAMALDIAMGGSTNTILHLLACAQEAELDYTVADMDEMSRRIPQLCKVAPSTPLYHMEDVHRAGGVMAILGELDRAGLLNSDIPTILSPTMKEQLAKYDIMQTDDPKIIDFYRAGPAGIRTVKPFSQSCRWDTVDNDRAAGCVRSLEHAFSTEGGLAVLFGNMAVDGAVVKTAGVDNDNLTFTGPAKIYESQDTAVAAILGGKVVEGDVVVIRYEGPQGGPGMQEMLYPTSYLKSMGLGKKCALVTDGRFSGGTSGLSIGHASPEAAAGGVIGLIEDGDIIDINIPTRTMDLKVSDEILAERRIAMDIHGWKPVSRERHVSTALKVYALMATSADKGAIRDISKLK</sequence>